<feature type="chain" id="PRO_1000116319" description="Argininosuccinate lyase">
    <location>
        <begin position="1"/>
        <end position="461"/>
    </location>
</feature>
<proteinExistence type="inferred from homology"/>
<keyword id="KW-0028">Amino-acid biosynthesis</keyword>
<keyword id="KW-0055">Arginine biosynthesis</keyword>
<keyword id="KW-0963">Cytoplasm</keyword>
<keyword id="KW-0456">Lyase</keyword>
<protein>
    <recommendedName>
        <fullName evidence="1">Argininosuccinate lyase</fullName>
        <shortName evidence="1">ASAL</shortName>
        <ecNumber evidence="1">4.3.2.1</ecNumber>
    </recommendedName>
    <alternativeName>
        <fullName evidence="1">Arginosuccinase</fullName>
    </alternativeName>
</protein>
<accession>B8FWX3</accession>
<gene>
    <name evidence="1" type="primary">argH</name>
    <name type="ordered locus">Dhaf_0796</name>
</gene>
<organism>
    <name type="scientific">Desulfitobacterium hafniense (strain DSM 10664 / DCB-2)</name>
    <dbReference type="NCBI Taxonomy" id="272564"/>
    <lineage>
        <taxon>Bacteria</taxon>
        <taxon>Bacillati</taxon>
        <taxon>Bacillota</taxon>
        <taxon>Clostridia</taxon>
        <taxon>Eubacteriales</taxon>
        <taxon>Desulfitobacteriaceae</taxon>
        <taxon>Desulfitobacterium</taxon>
    </lineage>
</organism>
<dbReference type="EC" id="4.3.2.1" evidence="1"/>
<dbReference type="EMBL" id="CP001336">
    <property type="protein sequence ID" value="ACL18859.1"/>
    <property type="molecule type" value="Genomic_DNA"/>
</dbReference>
<dbReference type="RefSeq" id="WP_005808617.1">
    <property type="nucleotide sequence ID" value="NC_011830.1"/>
</dbReference>
<dbReference type="SMR" id="B8FWX3"/>
<dbReference type="KEGG" id="dhd:Dhaf_0796"/>
<dbReference type="HOGENOM" id="CLU_027272_2_3_9"/>
<dbReference type="UniPathway" id="UPA00068">
    <property type="reaction ID" value="UER00114"/>
</dbReference>
<dbReference type="Proteomes" id="UP000007726">
    <property type="component" value="Chromosome"/>
</dbReference>
<dbReference type="GO" id="GO:0005829">
    <property type="term" value="C:cytosol"/>
    <property type="evidence" value="ECO:0007669"/>
    <property type="project" value="TreeGrafter"/>
</dbReference>
<dbReference type="GO" id="GO:0004056">
    <property type="term" value="F:argininosuccinate lyase activity"/>
    <property type="evidence" value="ECO:0007669"/>
    <property type="project" value="UniProtKB-UniRule"/>
</dbReference>
<dbReference type="GO" id="GO:0042450">
    <property type="term" value="P:arginine biosynthetic process via ornithine"/>
    <property type="evidence" value="ECO:0007669"/>
    <property type="project" value="InterPro"/>
</dbReference>
<dbReference type="GO" id="GO:0006526">
    <property type="term" value="P:L-arginine biosynthetic process"/>
    <property type="evidence" value="ECO:0007669"/>
    <property type="project" value="UniProtKB-UniRule"/>
</dbReference>
<dbReference type="CDD" id="cd01359">
    <property type="entry name" value="Argininosuccinate_lyase"/>
    <property type="match status" value="1"/>
</dbReference>
<dbReference type="FunFam" id="1.10.275.10:FF:000002">
    <property type="entry name" value="Argininosuccinate lyase"/>
    <property type="match status" value="1"/>
</dbReference>
<dbReference type="FunFam" id="1.10.40.30:FF:000001">
    <property type="entry name" value="Argininosuccinate lyase"/>
    <property type="match status" value="1"/>
</dbReference>
<dbReference type="FunFam" id="1.20.200.10:FF:000002">
    <property type="entry name" value="Argininosuccinate lyase"/>
    <property type="match status" value="1"/>
</dbReference>
<dbReference type="Gene3D" id="1.10.40.30">
    <property type="entry name" value="Fumarase/aspartase (C-terminal domain)"/>
    <property type="match status" value="1"/>
</dbReference>
<dbReference type="Gene3D" id="1.20.200.10">
    <property type="entry name" value="Fumarase/aspartase (Central domain)"/>
    <property type="match status" value="1"/>
</dbReference>
<dbReference type="Gene3D" id="1.10.275.10">
    <property type="entry name" value="Fumarase/aspartase (N-terminal domain)"/>
    <property type="match status" value="1"/>
</dbReference>
<dbReference type="HAMAP" id="MF_00006">
    <property type="entry name" value="Arg_succ_lyase"/>
    <property type="match status" value="1"/>
</dbReference>
<dbReference type="InterPro" id="IPR029419">
    <property type="entry name" value="Arg_succ_lyase_C"/>
</dbReference>
<dbReference type="InterPro" id="IPR009049">
    <property type="entry name" value="Argininosuccinate_lyase"/>
</dbReference>
<dbReference type="InterPro" id="IPR024083">
    <property type="entry name" value="Fumarase/histidase_N"/>
</dbReference>
<dbReference type="InterPro" id="IPR020557">
    <property type="entry name" value="Fumarate_lyase_CS"/>
</dbReference>
<dbReference type="InterPro" id="IPR000362">
    <property type="entry name" value="Fumarate_lyase_fam"/>
</dbReference>
<dbReference type="InterPro" id="IPR022761">
    <property type="entry name" value="Fumarate_lyase_N"/>
</dbReference>
<dbReference type="InterPro" id="IPR008948">
    <property type="entry name" value="L-Aspartase-like"/>
</dbReference>
<dbReference type="NCBIfam" id="TIGR00838">
    <property type="entry name" value="argH"/>
    <property type="match status" value="1"/>
</dbReference>
<dbReference type="PANTHER" id="PTHR43814">
    <property type="entry name" value="ARGININOSUCCINATE LYASE"/>
    <property type="match status" value="1"/>
</dbReference>
<dbReference type="PANTHER" id="PTHR43814:SF1">
    <property type="entry name" value="ARGININOSUCCINATE LYASE"/>
    <property type="match status" value="1"/>
</dbReference>
<dbReference type="Pfam" id="PF14698">
    <property type="entry name" value="ASL_C2"/>
    <property type="match status" value="1"/>
</dbReference>
<dbReference type="Pfam" id="PF00206">
    <property type="entry name" value="Lyase_1"/>
    <property type="match status" value="1"/>
</dbReference>
<dbReference type="PRINTS" id="PR00145">
    <property type="entry name" value="ARGSUCLYASE"/>
</dbReference>
<dbReference type="PRINTS" id="PR00149">
    <property type="entry name" value="FUMRATELYASE"/>
</dbReference>
<dbReference type="SUPFAM" id="SSF48557">
    <property type="entry name" value="L-aspartase-like"/>
    <property type="match status" value="1"/>
</dbReference>
<dbReference type="PROSITE" id="PS00163">
    <property type="entry name" value="FUMARATE_LYASES"/>
    <property type="match status" value="1"/>
</dbReference>
<evidence type="ECO:0000255" key="1">
    <source>
        <dbReference type="HAMAP-Rule" id="MF_00006"/>
    </source>
</evidence>
<reference key="1">
    <citation type="journal article" date="2012" name="BMC Microbiol.">
        <title>Genome sequence of Desulfitobacterium hafniense DCB-2, a Gram-positive anaerobe capable of dehalogenation and metal reduction.</title>
        <authorList>
            <person name="Kim S.H."/>
            <person name="Harzman C."/>
            <person name="Davis J.K."/>
            <person name="Hutcheson R."/>
            <person name="Broderick J.B."/>
            <person name="Marsh T.L."/>
            <person name="Tiedje J.M."/>
        </authorList>
    </citation>
    <scope>NUCLEOTIDE SEQUENCE [LARGE SCALE GENOMIC DNA]</scope>
    <source>
        <strain>DSM 10664 / DCB-2</strain>
    </source>
</reference>
<comment type="catalytic activity">
    <reaction evidence="1">
        <text>2-(N(omega)-L-arginino)succinate = fumarate + L-arginine</text>
        <dbReference type="Rhea" id="RHEA:24020"/>
        <dbReference type="ChEBI" id="CHEBI:29806"/>
        <dbReference type="ChEBI" id="CHEBI:32682"/>
        <dbReference type="ChEBI" id="CHEBI:57472"/>
        <dbReference type="EC" id="4.3.2.1"/>
    </reaction>
</comment>
<comment type="pathway">
    <text evidence="1">Amino-acid biosynthesis; L-arginine biosynthesis; L-arginine from L-ornithine and carbamoyl phosphate: step 3/3.</text>
</comment>
<comment type="subcellular location">
    <subcellularLocation>
        <location evidence="1">Cytoplasm</location>
    </subcellularLocation>
</comment>
<comment type="similarity">
    <text evidence="1">Belongs to the lyase 1 family. Argininosuccinate lyase subfamily.</text>
</comment>
<sequence length="461" mass="51639">MKLWGGRFEKSTDALVEDFHSSISFDQRLYKQDIQGSIAHARMLGEIGVLTSAEAQQIIEGLKGILTDIREGKIQFEIGAEDIHMNVEKLLTERVGTVGKKVHTGRSRNDQVALDLRLFLREEIDHTQELLIALLRTVLDLAKEHQETYMPGYTHLQKAQPISFAHHMMAYAQMFLRDLGRLKDTRQRLNVSPLGSGALAGTTFPLEREMVAQELGFDGITWNSLDGVSDRDFALEFLSAASILMMHLSRLCEELVLWSTGEFQFVIMDDGYSTGSSIMPQKKNPDVAELVRGKTGRVYGDLVALLTVMKGLPLAYNKDMQEDKEQVFDAVDTIQKSLLVVEPMLRTMKVNKKAMAEGAKGGFTNATDLADYLAKKNVPFREAHEIVGKLVLYCSKRGCGLEDLTLKEFQEHSDVFAEDLFESIGIEYCVRQRHIPGGPSPESVAQAILWTEHILEQFTGG</sequence>
<name>ARLY_DESHD</name>